<evidence type="ECO:0000250" key="1">
    <source>
        <dbReference type="UniProtKB" id="P00330"/>
    </source>
</evidence>
<evidence type="ECO:0000269" key="2">
    <source>
    </source>
</evidence>
<evidence type="ECO:0000269" key="3">
    <source>
    </source>
</evidence>
<evidence type="ECO:0000269" key="4">
    <source>
    </source>
</evidence>
<evidence type="ECO:0000305" key="5"/>
<evidence type="ECO:0000305" key="6">
    <source>
    </source>
</evidence>
<comment type="function">
    <text evidence="2 4">Reduces acetaldehyde to ethanol during the fermentation of glucose.</text>
</comment>
<comment type="catalytic activity">
    <reaction evidence="6">
        <text>a primary alcohol + NAD(+) = an aldehyde + NADH + H(+)</text>
        <dbReference type="Rhea" id="RHEA:10736"/>
        <dbReference type="ChEBI" id="CHEBI:15378"/>
        <dbReference type="ChEBI" id="CHEBI:15734"/>
        <dbReference type="ChEBI" id="CHEBI:17478"/>
        <dbReference type="ChEBI" id="CHEBI:57540"/>
        <dbReference type="ChEBI" id="CHEBI:57945"/>
        <dbReference type="EC" id="1.1.1.1"/>
    </reaction>
</comment>
<comment type="catalytic activity">
    <reaction evidence="6">
        <text>a secondary alcohol + NAD(+) = a ketone + NADH + H(+)</text>
        <dbReference type="Rhea" id="RHEA:10740"/>
        <dbReference type="ChEBI" id="CHEBI:15378"/>
        <dbReference type="ChEBI" id="CHEBI:17087"/>
        <dbReference type="ChEBI" id="CHEBI:35681"/>
        <dbReference type="ChEBI" id="CHEBI:57540"/>
        <dbReference type="ChEBI" id="CHEBI:57945"/>
        <dbReference type="EC" id="1.1.1.1"/>
    </reaction>
</comment>
<comment type="catalytic activity">
    <reaction evidence="4">
        <text>ethanol + NAD(+) = acetaldehyde + NADH + H(+)</text>
        <dbReference type="Rhea" id="RHEA:25290"/>
        <dbReference type="ChEBI" id="CHEBI:15343"/>
        <dbReference type="ChEBI" id="CHEBI:15378"/>
        <dbReference type="ChEBI" id="CHEBI:16236"/>
        <dbReference type="ChEBI" id="CHEBI:57540"/>
        <dbReference type="ChEBI" id="CHEBI:57945"/>
        <dbReference type="EC" id="1.1.1.1"/>
    </reaction>
    <physiologicalReaction direction="left-to-right" evidence="4">
        <dbReference type="Rhea" id="RHEA:25291"/>
    </physiologicalReaction>
    <physiologicalReaction direction="right-to-left" evidence="4">
        <dbReference type="Rhea" id="RHEA:25292"/>
    </physiologicalReaction>
</comment>
<comment type="cofactor">
    <cofactor>
        <name>Zn(2+)</name>
        <dbReference type="ChEBI" id="CHEBI:29105"/>
    </cofactor>
    <text evidence="1">Binds 2 Zn(2+) ions per subunit.</text>
</comment>
<comment type="biophysicochemical properties">
    <kinetics>
        <KM evidence="4">160 uM for NAD(+)</KM>
        <KM evidence="4">14 mM for ethanol</KM>
        <KM evidence="4">1.6 mM for acetaldehyde</KM>
        <KM evidence="4">100 uM for NADH</KM>
    </kinetics>
</comment>
<comment type="subunit">
    <text evidence="1">Homotetramer.</text>
</comment>
<comment type="subcellular location">
    <subcellularLocation>
        <location evidence="1">Cytoplasm</location>
    </subcellularLocation>
</comment>
<comment type="similarity">
    <text evidence="5">Belongs to the zinc-containing alcohol dehydrogenase family.</text>
</comment>
<protein>
    <recommendedName>
        <fullName evidence="5">Alcohol dehydrogenase</fullName>
        <ecNumber evidence="6">1.1.1.1</ecNumber>
    </recommendedName>
</protein>
<organism>
    <name type="scientific">Schizosaccharomyces pombe (strain 972 / ATCC 24843)</name>
    <name type="common">Fission yeast</name>
    <dbReference type="NCBI Taxonomy" id="284812"/>
    <lineage>
        <taxon>Eukaryota</taxon>
        <taxon>Fungi</taxon>
        <taxon>Dikarya</taxon>
        <taxon>Ascomycota</taxon>
        <taxon>Taphrinomycotina</taxon>
        <taxon>Schizosaccharomycetes</taxon>
        <taxon>Schizosaccharomycetales</taxon>
        <taxon>Schizosaccharomycetaceae</taxon>
        <taxon>Schizosaccharomyces</taxon>
    </lineage>
</organism>
<dbReference type="EC" id="1.1.1.1" evidence="6"/>
<dbReference type="EMBL" id="J01341">
    <property type="status" value="NOT_ANNOTATED_CDS"/>
    <property type="molecule type" value="Genomic_DNA"/>
</dbReference>
<dbReference type="EMBL" id="CU329672">
    <property type="protein sequence ID" value="CAA21782.1"/>
    <property type="molecule type" value="Genomic_DNA"/>
</dbReference>
<dbReference type="EMBL" id="AB001834">
    <property type="protein sequence ID" value="BAA19458.1"/>
    <property type="molecule type" value="mRNA"/>
</dbReference>
<dbReference type="PIR" id="A00341">
    <property type="entry name" value="DEZPA"/>
</dbReference>
<dbReference type="RefSeq" id="NP_588244.1">
    <property type="nucleotide sequence ID" value="NM_001023234.2"/>
</dbReference>
<dbReference type="SMR" id="P00332"/>
<dbReference type="BioGRID" id="275480">
    <property type="interactions" value="18"/>
</dbReference>
<dbReference type="FunCoup" id="P00332">
    <property type="interactions" value="411"/>
</dbReference>
<dbReference type="STRING" id="284812.P00332"/>
<dbReference type="iPTMnet" id="P00332"/>
<dbReference type="PaxDb" id="4896-SPCC13B11.01.1"/>
<dbReference type="EnsemblFungi" id="SPCC13B11.01.1">
    <property type="protein sequence ID" value="SPCC13B11.01.1:pep"/>
    <property type="gene ID" value="SPCC13B11.01"/>
</dbReference>
<dbReference type="GeneID" id="2538902"/>
<dbReference type="KEGG" id="spo:2538902"/>
<dbReference type="PomBase" id="SPCC13B11.01">
    <property type="gene designation" value="adh1"/>
</dbReference>
<dbReference type="VEuPathDB" id="FungiDB:SPCC13B11.01"/>
<dbReference type="eggNOG" id="KOG0023">
    <property type="taxonomic scope" value="Eukaryota"/>
</dbReference>
<dbReference type="HOGENOM" id="CLU_026673_20_1_1"/>
<dbReference type="InParanoid" id="P00332"/>
<dbReference type="OMA" id="AFPHVKP"/>
<dbReference type="PhylomeDB" id="P00332"/>
<dbReference type="PRO" id="PR:P00332"/>
<dbReference type="Proteomes" id="UP000002485">
    <property type="component" value="Chromosome III"/>
</dbReference>
<dbReference type="GO" id="GO:0005737">
    <property type="term" value="C:cytoplasm"/>
    <property type="evidence" value="ECO:0000318"/>
    <property type="project" value="GO_Central"/>
</dbReference>
<dbReference type="GO" id="GO:0004022">
    <property type="term" value="F:alcohol dehydrogenase (NAD+) activity"/>
    <property type="evidence" value="ECO:0000318"/>
    <property type="project" value="GO_Central"/>
</dbReference>
<dbReference type="GO" id="GO:0120542">
    <property type="term" value="F:ethanol dehydrogenase (NAD+) activity"/>
    <property type="evidence" value="ECO:0000315"/>
    <property type="project" value="PomBase"/>
</dbReference>
<dbReference type="GO" id="GO:0008270">
    <property type="term" value="F:zinc ion binding"/>
    <property type="evidence" value="ECO:0007669"/>
    <property type="project" value="InterPro"/>
</dbReference>
<dbReference type="GO" id="GO:0019655">
    <property type="term" value="P:glycolytic fermentation to ethanol"/>
    <property type="evidence" value="ECO:0000316"/>
    <property type="project" value="PomBase"/>
</dbReference>
<dbReference type="CDD" id="cd08297">
    <property type="entry name" value="CAD3"/>
    <property type="match status" value="1"/>
</dbReference>
<dbReference type="FunFam" id="3.40.50.720:FF:000039">
    <property type="entry name" value="Alcohol dehydrogenase AdhP"/>
    <property type="match status" value="1"/>
</dbReference>
<dbReference type="FunFam" id="3.90.180.10:FF:000002">
    <property type="entry name" value="Alcohol dehydrogenase AdhP"/>
    <property type="match status" value="1"/>
</dbReference>
<dbReference type="Gene3D" id="3.90.180.10">
    <property type="entry name" value="Medium-chain alcohol dehydrogenases, catalytic domain"/>
    <property type="match status" value="1"/>
</dbReference>
<dbReference type="Gene3D" id="3.40.50.720">
    <property type="entry name" value="NAD(P)-binding Rossmann-like Domain"/>
    <property type="match status" value="1"/>
</dbReference>
<dbReference type="InterPro" id="IPR013149">
    <property type="entry name" value="ADH-like_C"/>
</dbReference>
<dbReference type="InterPro" id="IPR013154">
    <property type="entry name" value="ADH-like_N"/>
</dbReference>
<dbReference type="InterPro" id="IPR002328">
    <property type="entry name" value="ADH_Zn_CS"/>
</dbReference>
<dbReference type="InterPro" id="IPR011032">
    <property type="entry name" value="GroES-like_sf"/>
</dbReference>
<dbReference type="InterPro" id="IPR036291">
    <property type="entry name" value="NAD(P)-bd_dom_sf"/>
</dbReference>
<dbReference type="InterPro" id="IPR020843">
    <property type="entry name" value="PKS_ER"/>
</dbReference>
<dbReference type="PANTHER" id="PTHR42940">
    <property type="entry name" value="ALCOHOL DEHYDROGENASE 1-RELATED"/>
    <property type="match status" value="1"/>
</dbReference>
<dbReference type="PANTHER" id="PTHR42940:SF3">
    <property type="entry name" value="ALCOHOL DEHYDROGENASE 1-RELATED"/>
    <property type="match status" value="1"/>
</dbReference>
<dbReference type="Pfam" id="PF08240">
    <property type="entry name" value="ADH_N"/>
    <property type="match status" value="1"/>
</dbReference>
<dbReference type="Pfam" id="PF00107">
    <property type="entry name" value="ADH_zinc_N"/>
    <property type="match status" value="1"/>
</dbReference>
<dbReference type="SMART" id="SM00829">
    <property type="entry name" value="PKS_ER"/>
    <property type="match status" value="1"/>
</dbReference>
<dbReference type="SUPFAM" id="SSF50129">
    <property type="entry name" value="GroES-like"/>
    <property type="match status" value="1"/>
</dbReference>
<dbReference type="SUPFAM" id="SSF51735">
    <property type="entry name" value="NAD(P)-binding Rossmann-fold domains"/>
    <property type="match status" value="1"/>
</dbReference>
<dbReference type="PROSITE" id="PS00059">
    <property type="entry name" value="ADH_ZINC"/>
    <property type="match status" value="1"/>
</dbReference>
<accession>P00332</accession>
<accession>Q9URT7</accession>
<sequence length="350" mass="37396">MTIPDKQLAAVFHTHGGPENVKFEEVPVAEPGQDEVLVNIKYTGVCHTDLHALQGDWPLPAKMPLIGGHEGAGVVVKVGAGVTRLKIGDRVGVKWMNSSCGNCEYCMKAEETICPHIQLSGYTVDGTFQHYCIANATHATIIPESVPLEVAAPIMCAGITCYRALKESKVGPGEWICIPGAGGGLGHLAVQYAKAMAMRVVAIDTGDDKAELVKSFGAEVFLDFKKEADMIEAVKAATNGGAHGTLVLSTSPKSYEQAAGFARPGSTMVTVSMPAGAKLGADIFWLTVKMLKICGSHVGNRIDSIEALEYVSRGLVKPYYKVQPFSTLPDVYRLMHENKIAGRIVLDLSK</sequence>
<reference key="1">
    <citation type="journal article" date="1983" name="J. Biol. Chem.">
        <title>The primary structure of the alcohol dehydrogenase gene from the fission yeast Schizosaccharomyces pombe.</title>
        <authorList>
            <person name="Russell P.R."/>
            <person name="Hall B.D."/>
        </authorList>
    </citation>
    <scope>NUCLEOTIDE SEQUENCE [GENOMIC DNA]</scope>
    <scope>FUNCTION</scope>
    <source>
        <strain>972 / ATCC 24843</strain>
    </source>
</reference>
<reference key="2">
    <citation type="journal article" date="2002" name="Nature">
        <title>The genome sequence of Schizosaccharomyces pombe.</title>
        <authorList>
            <person name="Wood V."/>
            <person name="Gwilliam R."/>
            <person name="Rajandream M.A."/>
            <person name="Lyne M.H."/>
            <person name="Lyne R."/>
            <person name="Stewart A."/>
            <person name="Sgouros J.G."/>
            <person name="Peat N."/>
            <person name="Hayles J."/>
            <person name="Baker S.G."/>
            <person name="Basham D."/>
            <person name="Bowman S."/>
            <person name="Brooks K."/>
            <person name="Brown D."/>
            <person name="Brown S."/>
            <person name="Chillingworth T."/>
            <person name="Churcher C.M."/>
            <person name="Collins M."/>
            <person name="Connor R."/>
            <person name="Cronin A."/>
            <person name="Davis P."/>
            <person name="Feltwell T."/>
            <person name="Fraser A."/>
            <person name="Gentles S."/>
            <person name="Goble A."/>
            <person name="Hamlin N."/>
            <person name="Harris D.E."/>
            <person name="Hidalgo J."/>
            <person name="Hodgson G."/>
            <person name="Holroyd S."/>
            <person name="Hornsby T."/>
            <person name="Howarth S."/>
            <person name="Huckle E.J."/>
            <person name="Hunt S."/>
            <person name="Jagels K."/>
            <person name="James K.D."/>
            <person name="Jones L."/>
            <person name="Jones M."/>
            <person name="Leather S."/>
            <person name="McDonald S."/>
            <person name="McLean J."/>
            <person name="Mooney P."/>
            <person name="Moule S."/>
            <person name="Mungall K.L."/>
            <person name="Murphy L.D."/>
            <person name="Niblett D."/>
            <person name="Odell C."/>
            <person name="Oliver K."/>
            <person name="O'Neil S."/>
            <person name="Pearson D."/>
            <person name="Quail M.A."/>
            <person name="Rabbinowitsch E."/>
            <person name="Rutherford K.M."/>
            <person name="Rutter S."/>
            <person name="Saunders D."/>
            <person name="Seeger K."/>
            <person name="Sharp S."/>
            <person name="Skelton J."/>
            <person name="Simmonds M.N."/>
            <person name="Squares R."/>
            <person name="Squares S."/>
            <person name="Stevens K."/>
            <person name="Taylor K."/>
            <person name="Taylor R.G."/>
            <person name="Tivey A."/>
            <person name="Walsh S.V."/>
            <person name="Warren T."/>
            <person name="Whitehead S."/>
            <person name="Woodward J.R."/>
            <person name="Volckaert G."/>
            <person name="Aert R."/>
            <person name="Robben J."/>
            <person name="Grymonprez B."/>
            <person name="Weltjens I."/>
            <person name="Vanstreels E."/>
            <person name="Rieger M."/>
            <person name="Schaefer M."/>
            <person name="Mueller-Auer S."/>
            <person name="Gabel C."/>
            <person name="Fuchs M."/>
            <person name="Duesterhoeft A."/>
            <person name="Fritzc C."/>
            <person name="Holzer E."/>
            <person name="Moestl D."/>
            <person name="Hilbert H."/>
            <person name="Borzym K."/>
            <person name="Langer I."/>
            <person name="Beck A."/>
            <person name="Lehrach H."/>
            <person name="Reinhardt R."/>
            <person name="Pohl T.M."/>
            <person name="Eger P."/>
            <person name="Zimmermann W."/>
            <person name="Wedler H."/>
            <person name="Wambutt R."/>
            <person name="Purnelle B."/>
            <person name="Goffeau A."/>
            <person name="Cadieu E."/>
            <person name="Dreano S."/>
            <person name="Gloux S."/>
            <person name="Lelaure V."/>
            <person name="Mottier S."/>
            <person name="Galibert F."/>
            <person name="Aves S.J."/>
            <person name="Xiang Z."/>
            <person name="Hunt C."/>
            <person name="Moore K."/>
            <person name="Hurst S.M."/>
            <person name="Lucas M."/>
            <person name="Rochet M."/>
            <person name="Gaillardin C."/>
            <person name="Tallada V.A."/>
            <person name="Garzon A."/>
            <person name="Thode G."/>
            <person name="Daga R.R."/>
            <person name="Cruzado L."/>
            <person name="Jimenez J."/>
            <person name="Sanchez M."/>
            <person name="del Rey F."/>
            <person name="Benito J."/>
            <person name="Dominguez A."/>
            <person name="Revuelta J.L."/>
            <person name="Moreno S."/>
            <person name="Armstrong J."/>
            <person name="Forsburg S.L."/>
            <person name="Cerutti L."/>
            <person name="Lowe T."/>
            <person name="McCombie W.R."/>
            <person name="Paulsen I."/>
            <person name="Potashkin J."/>
            <person name="Shpakovski G.V."/>
            <person name="Ussery D."/>
            <person name="Barrell B.G."/>
            <person name="Nurse P."/>
        </authorList>
    </citation>
    <scope>NUCLEOTIDE SEQUENCE [LARGE SCALE GENOMIC DNA]</scope>
    <source>
        <strain>972 / ATCC 24843</strain>
    </source>
</reference>
<reference key="3">
    <citation type="submission" date="1997-03" db="EMBL/GenBank/DDBJ databases">
        <title>S.pombe adh 3' region.</title>
        <authorList>
            <person name="Kawamukai M."/>
        </authorList>
    </citation>
    <scope>NUCLEOTIDE SEQUENCE [MRNA] OF 343-350</scope>
</reference>
<reference key="4">
    <citation type="journal article" date="1987" name="J. Biol. Chem.">
        <title>Kinetic characterization of yeast alcohol dehydrogenases. Amino acid residue 294 and substrate specificity.</title>
        <authorList>
            <person name="Ganzhorn A.J."/>
            <person name="Green D.W."/>
            <person name="Hershey A.D."/>
            <person name="Gould R.M."/>
            <person name="Plapp B.V."/>
        </authorList>
    </citation>
    <scope>FUNCTION</scope>
    <scope>CATALYTIC ACTIVITY</scope>
    <scope>BIOPHYSICOCHEMICAL PROPERTIES</scope>
</reference>
<reference key="5">
    <citation type="journal article" date="2004" name="FEMS Yeast Res.">
        <title>A distinct type of alcohol dehydrogenase, adh4+, complements ethanol fermentation in an adh1-deficient strain of Schizosaccharomyces pombe.</title>
        <authorList>
            <person name="Sakurai M."/>
            <person name="Tohda H."/>
            <person name="Kumagai H."/>
            <person name="Giga-Hama Y."/>
        </authorList>
    </citation>
    <scope>FUNCTION</scope>
</reference>
<reference key="6">
    <citation type="journal article" date="2008" name="J. Proteome Res.">
        <title>Phosphoproteome analysis of fission yeast.</title>
        <authorList>
            <person name="Wilson-Grady J.T."/>
            <person name="Villen J."/>
            <person name="Gygi S.P."/>
        </authorList>
    </citation>
    <scope>PHOSPHORYLATION [LARGE SCALE ANALYSIS] AT THR-205 AND THR-250</scope>
    <scope>IDENTIFICATION BY MASS SPECTROMETRY</scope>
</reference>
<feature type="chain" id="PRO_0000160729" description="Alcohol dehydrogenase">
    <location>
        <begin position="1"/>
        <end position="350"/>
    </location>
</feature>
<feature type="binding site" evidence="1">
    <location>
        <position position="46"/>
    </location>
    <ligand>
        <name>Zn(2+)</name>
        <dbReference type="ChEBI" id="CHEBI:29105"/>
        <label>1</label>
        <note>catalytic</note>
    </ligand>
</feature>
<feature type="binding site" evidence="1">
    <location>
        <position position="47"/>
    </location>
    <ligand>
        <name>NAD(+)</name>
        <dbReference type="ChEBI" id="CHEBI:57540"/>
    </ligand>
</feature>
<feature type="binding site" evidence="1">
    <location>
        <position position="48"/>
    </location>
    <ligand>
        <name>NAD(+)</name>
        <dbReference type="ChEBI" id="CHEBI:57540"/>
    </ligand>
</feature>
<feature type="binding site" evidence="1">
    <location>
        <position position="51"/>
    </location>
    <ligand>
        <name>NAD(+)</name>
        <dbReference type="ChEBI" id="CHEBI:57540"/>
    </ligand>
</feature>
<feature type="binding site" evidence="1">
    <location>
        <position position="69"/>
    </location>
    <ligand>
        <name>Zn(2+)</name>
        <dbReference type="ChEBI" id="CHEBI:29105"/>
        <label>1</label>
        <note>catalytic</note>
    </ligand>
</feature>
<feature type="binding site" evidence="1">
    <location>
        <position position="100"/>
    </location>
    <ligand>
        <name>Zn(2+)</name>
        <dbReference type="ChEBI" id="CHEBI:29105"/>
        <label>2</label>
    </ligand>
</feature>
<feature type="binding site" evidence="1">
    <location>
        <position position="103"/>
    </location>
    <ligand>
        <name>Zn(2+)</name>
        <dbReference type="ChEBI" id="CHEBI:29105"/>
        <label>2</label>
    </ligand>
</feature>
<feature type="binding site" evidence="1">
    <location>
        <position position="106"/>
    </location>
    <ligand>
        <name>Zn(2+)</name>
        <dbReference type="ChEBI" id="CHEBI:29105"/>
        <label>2</label>
    </ligand>
</feature>
<feature type="binding site" evidence="1">
    <location>
        <position position="114"/>
    </location>
    <ligand>
        <name>Zn(2+)</name>
        <dbReference type="ChEBI" id="CHEBI:29105"/>
        <label>2</label>
    </ligand>
</feature>
<feature type="binding site" evidence="1">
    <location>
        <position position="156"/>
    </location>
    <ligand>
        <name>Zn(2+)</name>
        <dbReference type="ChEBI" id="CHEBI:29105"/>
        <label>1</label>
        <note>catalytic</note>
    </ligand>
</feature>
<feature type="binding site" evidence="1">
    <location>
        <position position="183"/>
    </location>
    <ligand>
        <name>NAD(+)</name>
        <dbReference type="ChEBI" id="CHEBI:57540"/>
    </ligand>
</feature>
<feature type="binding site" evidence="1">
    <location>
        <position position="184"/>
    </location>
    <ligand>
        <name>NAD(+)</name>
        <dbReference type="ChEBI" id="CHEBI:57540"/>
    </ligand>
</feature>
<feature type="binding site" evidence="1">
    <location>
        <position position="185"/>
    </location>
    <ligand>
        <name>NAD(+)</name>
        <dbReference type="ChEBI" id="CHEBI:57540"/>
    </ligand>
</feature>
<feature type="binding site" evidence="1">
    <location>
        <position position="204"/>
    </location>
    <ligand>
        <name>NAD(+)</name>
        <dbReference type="ChEBI" id="CHEBI:57540"/>
    </ligand>
</feature>
<feature type="binding site" evidence="1">
    <location>
        <position position="209"/>
    </location>
    <ligand>
        <name>NAD(+)</name>
        <dbReference type="ChEBI" id="CHEBI:57540"/>
    </ligand>
</feature>
<feature type="binding site" evidence="1">
    <location>
        <position position="224"/>
    </location>
    <ligand>
        <name>NAD(+)</name>
        <dbReference type="ChEBI" id="CHEBI:57540"/>
    </ligand>
</feature>
<feature type="binding site" evidence="1">
    <location>
        <position position="271"/>
    </location>
    <ligand>
        <name>NAD(+)</name>
        <dbReference type="ChEBI" id="CHEBI:57540"/>
    </ligand>
</feature>
<feature type="binding site" evidence="1">
    <location>
        <position position="273"/>
    </location>
    <ligand>
        <name>NAD(+)</name>
        <dbReference type="ChEBI" id="CHEBI:57540"/>
    </ligand>
</feature>
<feature type="binding site" evidence="1">
    <location>
        <position position="296"/>
    </location>
    <ligand>
        <name>NAD(+)</name>
        <dbReference type="ChEBI" id="CHEBI:57540"/>
    </ligand>
</feature>
<feature type="binding site" evidence="1">
    <location>
        <position position="298"/>
    </location>
    <ligand>
        <name>NAD(+)</name>
        <dbReference type="ChEBI" id="CHEBI:57540"/>
    </ligand>
</feature>
<feature type="binding site" evidence="1">
    <location>
        <position position="343"/>
    </location>
    <ligand>
        <name>NAD(+)</name>
        <dbReference type="ChEBI" id="CHEBI:57540"/>
    </ligand>
</feature>
<feature type="modified residue" description="Phosphothreonine" evidence="3">
    <location>
        <position position="205"/>
    </location>
</feature>
<feature type="modified residue" description="Phosphothreonine" evidence="3">
    <location>
        <position position="250"/>
    </location>
</feature>
<feature type="sequence conflict" description="In Ref. 1; J01341." evidence="5" ref="1">
    <original>A</original>
    <variation>C</variation>
    <location>
        <position position="237"/>
    </location>
</feature>
<keyword id="KW-0963">Cytoplasm</keyword>
<keyword id="KW-0479">Metal-binding</keyword>
<keyword id="KW-0520">NAD</keyword>
<keyword id="KW-0560">Oxidoreductase</keyword>
<keyword id="KW-0597">Phosphoprotein</keyword>
<keyword id="KW-1185">Reference proteome</keyword>
<keyword id="KW-0862">Zinc</keyword>
<proteinExistence type="evidence at protein level"/>
<name>ADH_SCHPO</name>
<gene>
    <name type="primary">adh1</name>
    <name type="synonym">adh</name>
    <name type="ORF">SPCC13B11.01</name>
</gene>